<protein>
    <recommendedName>
        <fullName>Rhodopsin</fullName>
    </recommendedName>
</protein>
<name>OPSD_CHICK</name>
<sequence length="351" mass="39327">MNGTEGQDFYVPMSNKTGVVRSPFEYPQYYLAEPWKFSALAAYMFMLILLGFPVNFLTLYVTIQHKKLRTPLNYILLNLVVADLFMVFGGFTTTMYTSMNGYFVFGVTGCYIEGFFATLGGEIALWSLVVLAVERYVVVCKPMSNFRFGENHAIMGVAFSWIMAMACAAPPLFGWSRYIPEGMQCSCGIDYYTLKPEINNESFVIYMFVVHFMIPLAVIFFCYGNLVCTVKEAAAQQQESATTQKAEKEVTRMVIIMVIAFLICWVPYASVAFYIFTNQGSDFGPIFMTIPAFFAKSSAIYNPVIYIVMNKQFRNCMITTLCCGKNPLGDEDTSAGKTETSSVSTSQVSPA</sequence>
<keyword id="KW-0966">Cell projection</keyword>
<keyword id="KW-0157">Chromophore</keyword>
<keyword id="KW-1015">Disulfide bond</keyword>
<keyword id="KW-0297">G-protein coupled receptor</keyword>
<keyword id="KW-0325">Glycoprotein</keyword>
<keyword id="KW-0449">Lipoprotein</keyword>
<keyword id="KW-0472">Membrane</keyword>
<keyword id="KW-0564">Palmitate</keyword>
<keyword id="KW-0597">Phosphoprotein</keyword>
<keyword id="KW-0600">Photoreceptor protein</keyword>
<keyword id="KW-0675">Receptor</keyword>
<keyword id="KW-1185">Reference proteome</keyword>
<keyword id="KW-0681">Retinal protein</keyword>
<keyword id="KW-0716">Sensory transduction</keyword>
<keyword id="KW-0807">Transducer</keyword>
<keyword id="KW-0812">Transmembrane</keyword>
<keyword id="KW-1133">Transmembrane helix</keyword>
<keyword id="KW-0844">Vision</keyword>
<evidence type="ECO:0000250" key="1"/>
<evidence type="ECO:0000250" key="2">
    <source>
        <dbReference type="UniProtKB" id="P02699"/>
    </source>
</evidence>
<evidence type="ECO:0000250" key="3">
    <source>
        <dbReference type="UniProtKB" id="P08100"/>
    </source>
</evidence>
<evidence type="ECO:0000255" key="4"/>
<evidence type="ECO:0000255" key="5">
    <source>
        <dbReference type="PROSITE-ProRule" id="PRU00521"/>
    </source>
</evidence>
<evidence type="ECO:0000256" key="6">
    <source>
        <dbReference type="SAM" id="MobiDB-lite"/>
    </source>
</evidence>
<evidence type="ECO:0000305" key="7"/>
<dbReference type="EMBL" id="D00702">
    <property type="protein sequence ID" value="BAA00610.1"/>
    <property type="molecule type" value="Genomic_DNA"/>
</dbReference>
<dbReference type="PIR" id="S29152">
    <property type="entry name" value="S29152"/>
</dbReference>
<dbReference type="RefSeq" id="NP_001025777.1">
    <property type="nucleotide sequence ID" value="NM_001030606.1"/>
</dbReference>
<dbReference type="SMR" id="P22328"/>
<dbReference type="FunCoup" id="P22328">
    <property type="interactions" value="62"/>
</dbReference>
<dbReference type="STRING" id="9031.ENSGALP00000032596"/>
<dbReference type="GlyCosmos" id="P22328">
    <property type="glycosylation" value="2 sites, No reported glycans"/>
</dbReference>
<dbReference type="GlyGen" id="P22328">
    <property type="glycosylation" value="2 sites"/>
</dbReference>
<dbReference type="PaxDb" id="9031-ENSGALP00000032596"/>
<dbReference type="KEGG" id="gga:751791"/>
<dbReference type="VEuPathDB" id="HostDB:geneid_751791"/>
<dbReference type="eggNOG" id="KOG3656">
    <property type="taxonomic scope" value="Eukaryota"/>
</dbReference>
<dbReference type="InParanoid" id="P22328"/>
<dbReference type="OrthoDB" id="5962323at2759"/>
<dbReference type="PhylomeDB" id="P22328"/>
<dbReference type="PRO" id="PR:P22328"/>
<dbReference type="Proteomes" id="UP000000539">
    <property type="component" value="Unassembled WGS sequence"/>
</dbReference>
<dbReference type="GO" id="GO:0016020">
    <property type="term" value="C:membrane"/>
    <property type="evidence" value="ECO:0000250"/>
    <property type="project" value="UniProtKB"/>
</dbReference>
<dbReference type="GO" id="GO:0097381">
    <property type="term" value="C:photoreceptor disc membrane"/>
    <property type="evidence" value="ECO:0000250"/>
    <property type="project" value="UniProtKB"/>
</dbReference>
<dbReference type="GO" id="GO:0001750">
    <property type="term" value="C:photoreceptor outer segment"/>
    <property type="evidence" value="ECO:0000314"/>
    <property type="project" value="AgBase"/>
</dbReference>
<dbReference type="GO" id="GO:0005886">
    <property type="term" value="C:plasma membrane"/>
    <property type="evidence" value="ECO:0000250"/>
    <property type="project" value="UniProtKB"/>
</dbReference>
<dbReference type="GO" id="GO:0005502">
    <property type="term" value="F:11-cis retinal binding"/>
    <property type="evidence" value="ECO:0000250"/>
    <property type="project" value="UniProtKB"/>
</dbReference>
<dbReference type="GO" id="GO:0008020">
    <property type="term" value="F:G protein-coupled photoreceptor activity"/>
    <property type="evidence" value="ECO:0000250"/>
    <property type="project" value="UniProtKB"/>
</dbReference>
<dbReference type="GO" id="GO:0001965">
    <property type="term" value="F:G-protein alpha-subunit binding"/>
    <property type="evidence" value="ECO:0000353"/>
    <property type="project" value="AgBase"/>
</dbReference>
<dbReference type="GO" id="GO:0042803">
    <property type="term" value="F:protein homodimerization activity"/>
    <property type="evidence" value="ECO:0000314"/>
    <property type="project" value="AgBase"/>
</dbReference>
<dbReference type="GO" id="GO:0016038">
    <property type="term" value="P:absorption of visible light"/>
    <property type="evidence" value="ECO:0000250"/>
    <property type="project" value="UniProtKB"/>
</dbReference>
<dbReference type="GO" id="GO:0071482">
    <property type="term" value="P:cellular response to light stimulus"/>
    <property type="evidence" value="ECO:0000318"/>
    <property type="project" value="GO_Central"/>
</dbReference>
<dbReference type="GO" id="GO:0016056">
    <property type="term" value="P:G protein-coupled opsin signaling pathway"/>
    <property type="evidence" value="ECO:0000250"/>
    <property type="project" value="UniProtKB"/>
</dbReference>
<dbReference type="GO" id="GO:0007186">
    <property type="term" value="P:G protein-coupled receptor signaling pathway"/>
    <property type="evidence" value="ECO:0000318"/>
    <property type="project" value="GO_Central"/>
</dbReference>
<dbReference type="GO" id="GO:0016037">
    <property type="term" value="P:light absorption"/>
    <property type="evidence" value="ECO:0000314"/>
    <property type="project" value="AgBase"/>
</dbReference>
<dbReference type="GO" id="GO:0007602">
    <property type="term" value="P:phototransduction"/>
    <property type="evidence" value="ECO:0000318"/>
    <property type="project" value="GO_Central"/>
</dbReference>
<dbReference type="GO" id="GO:0070207">
    <property type="term" value="P:protein homotrimerization"/>
    <property type="evidence" value="ECO:0000314"/>
    <property type="project" value="AgBase"/>
</dbReference>
<dbReference type="GO" id="GO:0007601">
    <property type="term" value="P:visual perception"/>
    <property type="evidence" value="ECO:0007669"/>
    <property type="project" value="UniProtKB-KW"/>
</dbReference>
<dbReference type="CDD" id="cd15080">
    <property type="entry name" value="7tmA_MWS_opsin"/>
    <property type="match status" value="1"/>
</dbReference>
<dbReference type="FunFam" id="1.20.1070.10:FF:000018">
    <property type="entry name" value="Rhodopsin"/>
    <property type="match status" value="1"/>
</dbReference>
<dbReference type="Gene3D" id="1.20.1070.10">
    <property type="entry name" value="Rhodopsin 7-helix transmembrane proteins"/>
    <property type="match status" value="1"/>
</dbReference>
<dbReference type="InterPro" id="IPR050125">
    <property type="entry name" value="GPCR_opsins"/>
</dbReference>
<dbReference type="InterPro" id="IPR000276">
    <property type="entry name" value="GPCR_Rhodpsn"/>
</dbReference>
<dbReference type="InterPro" id="IPR017452">
    <property type="entry name" value="GPCR_Rhodpsn_7TM"/>
</dbReference>
<dbReference type="InterPro" id="IPR001760">
    <property type="entry name" value="Opsin"/>
</dbReference>
<dbReference type="InterPro" id="IPR027430">
    <property type="entry name" value="Retinal_BS"/>
</dbReference>
<dbReference type="InterPro" id="IPR000732">
    <property type="entry name" value="Rhodopsin"/>
</dbReference>
<dbReference type="InterPro" id="IPR019477">
    <property type="entry name" value="Rhodopsin_N"/>
</dbReference>
<dbReference type="PANTHER" id="PTHR24240">
    <property type="entry name" value="OPSIN"/>
    <property type="match status" value="1"/>
</dbReference>
<dbReference type="Pfam" id="PF00001">
    <property type="entry name" value="7tm_1"/>
    <property type="match status" value="1"/>
</dbReference>
<dbReference type="Pfam" id="PF10413">
    <property type="entry name" value="Rhodopsin_N"/>
    <property type="match status" value="1"/>
</dbReference>
<dbReference type="PRINTS" id="PR00237">
    <property type="entry name" value="GPCRRHODOPSN"/>
</dbReference>
<dbReference type="PRINTS" id="PR00238">
    <property type="entry name" value="OPSIN"/>
</dbReference>
<dbReference type="PRINTS" id="PR00579">
    <property type="entry name" value="RHODOPSIN"/>
</dbReference>
<dbReference type="SUPFAM" id="SSF81321">
    <property type="entry name" value="Family A G protein-coupled receptor-like"/>
    <property type="match status" value="1"/>
</dbReference>
<dbReference type="PROSITE" id="PS00237">
    <property type="entry name" value="G_PROTEIN_RECEP_F1_1"/>
    <property type="match status" value="1"/>
</dbReference>
<dbReference type="PROSITE" id="PS50262">
    <property type="entry name" value="G_PROTEIN_RECEP_F1_2"/>
    <property type="match status" value="1"/>
</dbReference>
<dbReference type="PROSITE" id="PS00238">
    <property type="entry name" value="OPSIN"/>
    <property type="match status" value="1"/>
</dbReference>
<organism>
    <name type="scientific">Gallus gallus</name>
    <name type="common">Chicken</name>
    <dbReference type="NCBI Taxonomy" id="9031"/>
    <lineage>
        <taxon>Eukaryota</taxon>
        <taxon>Metazoa</taxon>
        <taxon>Chordata</taxon>
        <taxon>Craniata</taxon>
        <taxon>Vertebrata</taxon>
        <taxon>Euteleostomi</taxon>
        <taxon>Archelosauria</taxon>
        <taxon>Archosauria</taxon>
        <taxon>Dinosauria</taxon>
        <taxon>Saurischia</taxon>
        <taxon>Theropoda</taxon>
        <taxon>Coelurosauria</taxon>
        <taxon>Aves</taxon>
        <taxon>Neognathae</taxon>
        <taxon>Galloanserae</taxon>
        <taxon>Galliformes</taxon>
        <taxon>Phasianidae</taxon>
        <taxon>Phasianinae</taxon>
        <taxon>Gallus</taxon>
    </lineage>
</organism>
<reference key="1">
    <citation type="journal article" date="1988" name="Vision Res.">
        <title>Isolation and sequence determination of the chicken rhodopsin gene.</title>
        <authorList>
            <person name="Takao M."/>
            <person name="Yasui A."/>
            <person name="Tokunaga F."/>
        </authorList>
    </citation>
    <scope>NUCLEOTIDE SEQUENCE [GENOMIC DNA]</scope>
    <source>
        <tissue>Retina</tissue>
    </source>
</reference>
<feature type="chain" id="PRO_0000197660" description="Rhodopsin">
    <location>
        <begin position="1"/>
        <end position="351"/>
    </location>
</feature>
<feature type="topological domain" description="Extracellular" evidence="7">
    <location>
        <begin position="1"/>
        <end position="36"/>
    </location>
</feature>
<feature type="transmembrane region" description="Helical; Name=1" evidence="2">
    <location>
        <begin position="37"/>
        <end position="61"/>
    </location>
</feature>
<feature type="topological domain" description="Cytoplasmic" evidence="7">
    <location>
        <begin position="62"/>
        <end position="73"/>
    </location>
</feature>
<feature type="transmembrane region" description="Helical; Name=2" evidence="2">
    <location>
        <begin position="74"/>
        <end position="96"/>
    </location>
</feature>
<feature type="topological domain" description="Extracellular" evidence="7">
    <location>
        <begin position="97"/>
        <end position="110"/>
    </location>
</feature>
<feature type="transmembrane region" description="Helical; Name=3" evidence="2">
    <location>
        <begin position="111"/>
        <end position="133"/>
    </location>
</feature>
<feature type="topological domain" description="Cytoplasmic" evidence="7">
    <location>
        <begin position="134"/>
        <end position="152"/>
    </location>
</feature>
<feature type="transmembrane region" description="Helical; Name=4" evidence="2">
    <location>
        <begin position="153"/>
        <end position="173"/>
    </location>
</feature>
<feature type="topological domain" description="Extracellular" evidence="7">
    <location>
        <begin position="174"/>
        <end position="202"/>
    </location>
</feature>
<feature type="transmembrane region" description="Helical; Name=5" evidence="2">
    <location>
        <begin position="203"/>
        <end position="224"/>
    </location>
</feature>
<feature type="topological domain" description="Cytoplasmic" evidence="7">
    <location>
        <begin position="225"/>
        <end position="252"/>
    </location>
</feature>
<feature type="transmembrane region" description="Helical; Name=6" evidence="2">
    <location>
        <begin position="253"/>
        <end position="274"/>
    </location>
</feature>
<feature type="topological domain" description="Extracellular" evidence="7">
    <location>
        <begin position="275"/>
        <end position="286"/>
    </location>
</feature>
<feature type="transmembrane region" description="Helical; Name=7" evidence="2">
    <location>
        <begin position="287"/>
        <end position="308"/>
    </location>
</feature>
<feature type="topological domain" description="Cytoplasmic" evidence="7">
    <location>
        <begin position="309"/>
        <end position="351"/>
    </location>
</feature>
<feature type="region of interest" description="Disordered" evidence="6">
    <location>
        <begin position="331"/>
        <end position="351"/>
    </location>
</feature>
<feature type="short sequence motif" description="'Ionic lock' involved in activated form stabilization" evidence="2">
    <location>
        <begin position="134"/>
        <end position="136"/>
    </location>
</feature>
<feature type="compositionally biased region" description="Low complexity" evidence="6">
    <location>
        <begin position="340"/>
        <end position="351"/>
    </location>
</feature>
<feature type="site" description="Plays an important role in the conformation switch to the active conformation" evidence="2">
    <location>
        <position position="113"/>
    </location>
</feature>
<feature type="modified residue" description="N6-(retinylidene)lysine" evidence="2">
    <location>
        <position position="296"/>
    </location>
</feature>
<feature type="modified residue" description="Phosphoserine; by RK and GRK7" evidence="1">
    <location>
        <position position="341"/>
    </location>
</feature>
<feature type="lipid moiety-binding region" description="S-palmitoyl cysteine" evidence="2">
    <location>
        <position position="322"/>
    </location>
</feature>
<feature type="lipid moiety-binding region" description="S-palmitoyl cysteine" evidence="2">
    <location>
        <position position="323"/>
    </location>
</feature>
<feature type="glycosylation site" description="N-linked (GlcNAc...) asparagine" evidence="4">
    <location>
        <position position="2"/>
    </location>
</feature>
<feature type="glycosylation site" description="N-linked (GlcNAc...) asparagine" evidence="4">
    <location>
        <position position="15"/>
    </location>
</feature>
<feature type="disulfide bond" evidence="5">
    <location>
        <begin position="110"/>
        <end position="187"/>
    </location>
</feature>
<comment type="function">
    <text evidence="2 3">Photoreceptor required for image-forming vision at low light intensity. Required for photoreceptor cell viability after birth (By similarity). Light-induced isomerization of 11-cis to all-trans retinal triggers a conformational change that activates signaling via G-proteins. Subsequent receptor phosphorylation mediates displacement of the bound G-protein alpha subunit by arrestin and terminates signaling (By similarity).</text>
</comment>
<comment type="subcellular location">
    <subcellularLocation>
        <location evidence="3">Membrane</location>
        <topology evidence="3">Multi-pass membrane protein</topology>
    </subcellularLocation>
    <subcellularLocation>
        <location evidence="3">Cell projection</location>
        <location evidence="3">Cilium</location>
        <location evidence="3">Photoreceptor outer segment</location>
    </subcellularLocation>
    <text evidence="3">Synthesized in the inner segment (IS) of rod photoreceptor cells before vectorial transport to disk membranes in the rod outer segment (OS) photosensory cilia.</text>
</comment>
<comment type="PTM">
    <text evidence="2">Contains one covalently linked retinal chromophore. Upon light absorption, the covalently bound 11-cis-retinal is converted to all-trans-retinal. After hydrolysis of the Schiff base and release of the covalently bound all-trans-retinal, active rhodopsin is regenerated by binding of a fresh molecule of 11-cis-retinal.</text>
</comment>
<comment type="similarity">
    <text evidence="5">Belongs to the G-protein coupled receptor 1 family. Opsin subfamily.</text>
</comment>
<gene>
    <name type="primary">RHO</name>
</gene>
<proteinExistence type="inferred from homology"/>
<accession>P22328</accession>